<feature type="chain" id="PRO_0000398724" description="2-phospho-L-lactate guanylyltransferase">
    <location>
        <begin position="1"/>
        <end position="200"/>
    </location>
</feature>
<protein>
    <recommendedName>
        <fullName evidence="1">2-phospho-L-lactate guanylyltransferase</fullName>
        <shortName evidence="1">LP guanylyltransferase</shortName>
        <ecNumber evidence="1">2.7.7.68</ecNumber>
    </recommendedName>
</protein>
<proteinExistence type="inferred from homology"/>
<keyword id="KW-0342">GTP-binding</keyword>
<keyword id="KW-0547">Nucleotide-binding</keyword>
<keyword id="KW-0548">Nucleotidyltransferase</keyword>
<keyword id="KW-1185">Reference proteome</keyword>
<keyword id="KW-0808">Transferase</keyword>
<reference key="1">
    <citation type="submission" date="2010-02" db="EMBL/GenBank/DDBJ databases">
        <title>Complete sequence of Ferroglobus placidus DSM 10642.</title>
        <authorList>
            <consortium name="US DOE Joint Genome Institute"/>
            <person name="Lucas S."/>
            <person name="Copeland A."/>
            <person name="Lapidus A."/>
            <person name="Cheng J.-F."/>
            <person name="Bruce D."/>
            <person name="Goodwin L."/>
            <person name="Pitluck S."/>
            <person name="Saunders E."/>
            <person name="Brettin T."/>
            <person name="Detter J.C."/>
            <person name="Han C."/>
            <person name="Tapia R."/>
            <person name="Larimer F."/>
            <person name="Land M."/>
            <person name="Hauser L."/>
            <person name="Kyrpides N."/>
            <person name="Ivanova N."/>
            <person name="Holmes D."/>
            <person name="Lovley D."/>
            <person name="Kyrpides N."/>
            <person name="Anderson I.J."/>
            <person name="Woyke T."/>
        </authorList>
    </citation>
    <scope>NUCLEOTIDE SEQUENCE [LARGE SCALE GENOMIC DNA]</scope>
    <source>
        <strain>DSM 10642 / AEDII12DO</strain>
    </source>
</reference>
<comment type="function">
    <text evidence="1">Guanylyltransferase that catalyzes the activation of (2S)-2-phospholactate (2-PL) as (2S)-lactyl-2-diphospho-5'-guanosine, via the condensation of 2-PL with GTP. It is involved in the biosynthesis of coenzyme F420, a hydride carrier cofactor.</text>
</comment>
<comment type="catalytic activity">
    <reaction evidence="1">
        <text>(2S)-2-phospholactate + GTP + H(+) = (2S)-lactyl-2-diphospho-5'-guanosine + diphosphate</text>
        <dbReference type="Rhea" id="RHEA:63424"/>
        <dbReference type="ChEBI" id="CHEBI:15378"/>
        <dbReference type="ChEBI" id="CHEBI:33019"/>
        <dbReference type="ChEBI" id="CHEBI:37565"/>
        <dbReference type="ChEBI" id="CHEBI:59435"/>
        <dbReference type="ChEBI" id="CHEBI:59906"/>
        <dbReference type="EC" id="2.7.7.68"/>
    </reaction>
</comment>
<comment type="pathway">
    <text evidence="1">Cofactor biosynthesis; coenzyme F420 biosynthesis.</text>
</comment>
<comment type="subunit">
    <text evidence="1">Homodimer.</text>
</comment>
<comment type="similarity">
    <text evidence="1">Belongs to the CofC family.</text>
</comment>
<accession>D3RZQ1</accession>
<evidence type="ECO:0000255" key="1">
    <source>
        <dbReference type="HAMAP-Rule" id="MF_02114"/>
    </source>
</evidence>
<gene>
    <name evidence="1" type="primary">cofC</name>
    <name type="ordered locus">Ferp_1821</name>
</gene>
<name>COFC_FERPA</name>
<dbReference type="EC" id="2.7.7.68" evidence="1"/>
<dbReference type="EMBL" id="CP001899">
    <property type="protein sequence ID" value="ADC65964.1"/>
    <property type="molecule type" value="Genomic_DNA"/>
</dbReference>
<dbReference type="RefSeq" id="WP_012966303.1">
    <property type="nucleotide sequence ID" value="NC_013849.1"/>
</dbReference>
<dbReference type="SMR" id="D3RZQ1"/>
<dbReference type="STRING" id="589924.Ferp_1821"/>
<dbReference type="PaxDb" id="589924-Ferp_1821"/>
<dbReference type="GeneID" id="8779349"/>
<dbReference type="KEGG" id="fpl:Ferp_1821"/>
<dbReference type="eggNOG" id="arCOG04472">
    <property type="taxonomic scope" value="Archaea"/>
</dbReference>
<dbReference type="HOGENOM" id="CLU_076569_2_0_2"/>
<dbReference type="OrthoDB" id="11179at2157"/>
<dbReference type="UniPathway" id="UPA00071"/>
<dbReference type="Proteomes" id="UP000002613">
    <property type="component" value="Chromosome"/>
</dbReference>
<dbReference type="GO" id="GO:0005525">
    <property type="term" value="F:GTP binding"/>
    <property type="evidence" value="ECO:0007669"/>
    <property type="project" value="UniProtKB-KW"/>
</dbReference>
<dbReference type="GO" id="GO:0043814">
    <property type="term" value="F:phospholactate guanylyltransferase activity"/>
    <property type="evidence" value="ECO:0007669"/>
    <property type="project" value="UniProtKB-EC"/>
</dbReference>
<dbReference type="GO" id="GO:0052645">
    <property type="term" value="P:F420-0 metabolic process"/>
    <property type="evidence" value="ECO:0007669"/>
    <property type="project" value="UniProtKB-UniRule"/>
</dbReference>
<dbReference type="Gene3D" id="6.10.140.50">
    <property type="match status" value="1"/>
</dbReference>
<dbReference type="Gene3D" id="3.90.550.10">
    <property type="entry name" value="Spore Coat Polysaccharide Biosynthesis Protein SpsA, Chain A"/>
    <property type="match status" value="1"/>
</dbReference>
<dbReference type="HAMAP" id="MF_02114">
    <property type="entry name" value="CofC"/>
    <property type="match status" value="1"/>
</dbReference>
<dbReference type="InterPro" id="IPR002835">
    <property type="entry name" value="CofC"/>
</dbReference>
<dbReference type="InterPro" id="IPR029044">
    <property type="entry name" value="Nucleotide-diphossugar_trans"/>
</dbReference>
<dbReference type="NCBIfam" id="TIGR03552">
    <property type="entry name" value="F420_cofC"/>
    <property type="match status" value="1"/>
</dbReference>
<dbReference type="PANTHER" id="PTHR40392">
    <property type="entry name" value="2-PHOSPHO-L-LACTATE GUANYLYLTRANSFERASE"/>
    <property type="match status" value="1"/>
</dbReference>
<dbReference type="PANTHER" id="PTHR40392:SF1">
    <property type="entry name" value="2-PHOSPHO-L-LACTATE GUANYLYLTRANSFERASE"/>
    <property type="match status" value="1"/>
</dbReference>
<dbReference type="Pfam" id="PF01983">
    <property type="entry name" value="CofC"/>
    <property type="match status" value="1"/>
</dbReference>
<dbReference type="SUPFAM" id="SSF53448">
    <property type="entry name" value="Nucleotide-diphospho-sugar transferases"/>
    <property type="match status" value="1"/>
</dbReference>
<organism>
    <name type="scientific">Ferroglobus placidus (strain DSM 10642 / AEDII12DO)</name>
    <dbReference type="NCBI Taxonomy" id="589924"/>
    <lineage>
        <taxon>Archaea</taxon>
        <taxon>Methanobacteriati</taxon>
        <taxon>Methanobacteriota</taxon>
        <taxon>Archaeoglobi</taxon>
        <taxon>Archaeoglobales</taxon>
        <taxon>Archaeoglobaceae</taxon>
        <taxon>Ferroglobus</taxon>
    </lineage>
</organism>
<sequence length="200" mass="23035">MKIYVPFKPTNPKSRLSKIMSEDERREFAFQLLLDVLDCCEEAVVLSASRDERLRDLKHEVDERDLDTAVTSRIKKEDSAFVMSDLALISKKIVKKFLDTDGDVVIAPGRKGGTNMLLSRSREFYTSYHYGSFLKHVRIAEKLGLNLSIFDSFYASIDIDDESDLLELMLHGKGKRSYEYLESIGFYVDFSEKEPKLKRA</sequence>